<accession>P0A880</accession>
<accession>P00932</accession>
<accession>P78146</accession>
<sequence>MTTLLNPYFGEFGGMYVPQILMPALRQLEEAFVSAQKDPEFQAQFNDLLKNYAGRPTALTKCQNITAGTNTTLYLKREDLLHGGAHKTNQVLGQALLAKRMGKTEIIAETGAGQHGVASALASALLGLKCRIYMGAKDVERQSPNVFRMRLMGAEVIPVHSGSATLKDACNEALRDWSGSYETAHYMLGTAAGPHPYPTIVREFQRMIGEETKAQILEREGRLPDAVIACVGGGSNAIGMFADFINETNVGLIGVEPGGHGIETGEHGAPLKHGRVGIYFGMKAPMMQTEDGQIEESYSISAGLDFPSVGPQHAYLNSTGRADYVSITDDEALEAFKTLCLHEGIIPALESSHALAHALKMMRENPDKEQLLVVNLSGRGDKDIFTVHDILKARGEI</sequence>
<comment type="function">
    <text evidence="1">The beta subunit is responsible for the synthesis of L-tryptophan from indole and L-serine.</text>
</comment>
<comment type="catalytic activity">
    <reaction>
        <text>(1S,2R)-1-C-(indol-3-yl)glycerol 3-phosphate + L-serine = D-glyceraldehyde 3-phosphate + L-tryptophan + H2O</text>
        <dbReference type="Rhea" id="RHEA:10532"/>
        <dbReference type="ChEBI" id="CHEBI:15377"/>
        <dbReference type="ChEBI" id="CHEBI:33384"/>
        <dbReference type="ChEBI" id="CHEBI:57912"/>
        <dbReference type="ChEBI" id="CHEBI:58866"/>
        <dbReference type="ChEBI" id="CHEBI:59776"/>
        <dbReference type="EC" id="4.2.1.20"/>
    </reaction>
</comment>
<comment type="cofactor">
    <cofactor evidence="1">
        <name>pyridoxal 5'-phosphate</name>
        <dbReference type="ChEBI" id="CHEBI:597326"/>
    </cofactor>
</comment>
<comment type="pathway">
    <text>Amino-acid biosynthesis; L-tryptophan biosynthesis; L-tryptophan from chorismate: step 5/5.</text>
</comment>
<comment type="subunit">
    <text evidence="1">Tetramer of two alpha and two beta chains.</text>
</comment>
<comment type="similarity">
    <text evidence="2">Belongs to the TrpB family.</text>
</comment>
<proteinExistence type="inferred from homology"/>
<organism>
    <name type="scientific">Shigella flexneri</name>
    <dbReference type="NCBI Taxonomy" id="623"/>
    <lineage>
        <taxon>Bacteria</taxon>
        <taxon>Pseudomonadati</taxon>
        <taxon>Pseudomonadota</taxon>
        <taxon>Gammaproteobacteria</taxon>
        <taxon>Enterobacterales</taxon>
        <taxon>Enterobacteriaceae</taxon>
        <taxon>Shigella</taxon>
    </lineage>
</organism>
<keyword id="KW-0028">Amino-acid biosynthesis</keyword>
<keyword id="KW-0057">Aromatic amino acid biosynthesis</keyword>
<keyword id="KW-0456">Lyase</keyword>
<keyword id="KW-0663">Pyridoxal phosphate</keyword>
<keyword id="KW-1185">Reference proteome</keyword>
<keyword id="KW-0822">Tryptophan biosynthesis</keyword>
<evidence type="ECO:0000250" key="1"/>
<evidence type="ECO:0000305" key="2"/>
<reference key="1">
    <citation type="journal article" date="2002" name="Nucleic Acids Res.">
        <title>Genome sequence of Shigella flexneri 2a: insights into pathogenicity through comparison with genomes of Escherichia coli K12 and O157.</title>
        <authorList>
            <person name="Jin Q."/>
            <person name="Yuan Z."/>
            <person name="Xu J."/>
            <person name="Wang Y."/>
            <person name="Shen Y."/>
            <person name="Lu W."/>
            <person name="Wang J."/>
            <person name="Liu H."/>
            <person name="Yang J."/>
            <person name="Yang F."/>
            <person name="Zhang X."/>
            <person name="Zhang J."/>
            <person name="Yang G."/>
            <person name="Wu H."/>
            <person name="Qu D."/>
            <person name="Dong J."/>
            <person name="Sun L."/>
            <person name="Xue Y."/>
            <person name="Zhao A."/>
            <person name="Gao Y."/>
            <person name="Zhu J."/>
            <person name="Kan B."/>
            <person name="Ding K."/>
            <person name="Chen S."/>
            <person name="Cheng H."/>
            <person name="Yao Z."/>
            <person name="He B."/>
            <person name="Chen R."/>
            <person name="Ma D."/>
            <person name="Qiang B."/>
            <person name="Wen Y."/>
            <person name="Hou Y."/>
            <person name="Yu J."/>
        </authorList>
    </citation>
    <scope>NUCLEOTIDE SEQUENCE [LARGE SCALE GENOMIC DNA]</scope>
    <source>
        <strain>301 / Serotype 2a</strain>
    </source>
</reference>
<reference key="2">
    <citation type="journal article" date="2003" name="Infect. Immun.">
        <title>Complete genome sequence and comparative genomics of Shigella flexneri serotype 2a strain 2457T.</title>
        <authorList>
            <person name="Wei J."/>
            <person name="Goldberg M.B."/>
            <person name="Burland V."/>
            <person name="Venkatesan M.M."/>
            <person name="Deng W."/>
            <person name="Fournier G."/>
            <person name="Mayhew G.F."/>
            <person name="Plunkett G. III"/>
            <person name="Rose D.J."/>
            <person name="Darling A."/>
            <person name="Mau B."/>
            <person name="Perna N.T."/>
            <person name="Payne S.M."/>
            <person name="Runyen-Janecky L.J."/>
            <person name="Zhou S."/>
            <person name="Schwartz D.C."/>
            <person name="Blattner F.R."/>
        </authorList>
    </citation>
    <scope>NUCLEOTIDE SEQUENCE [LARGE SCALE GENOMIC DNA]</scope>
    <source>
        <strain>ATCC 700930 / 2457T / Serotype 2a</strain>
    </source>
</reference>
<dbReference type="EC" id="4.2.1.20"/>
<dbReference type="EMBL" id="AE005674">
    <property type="protein sequence ID" value="AAN42877.1"/>
    <property type="molecule type" value="Genomic_DNA"/>
</dbReference>
<dbReference type="EMBL" id="AE014073">
    <property type="protein sequence ID" value="AAP16762.1"/>
    <property type="molecule type" value="Genomic_DNA"/>
</dbReference>
<dbReference type="RefSeq" id="NP_707170.1">
    <property type="nucleotide sequence ID" value="NC_004337.2"/>
</dbReference>
<dbReference type="RefSeq" id="WP_000209520.1">
    <property type="nucleotide sequence ID" value="NZ_WPGW01000009.1"/>
</dbReference>
<dbReference type="SMR" id="P0A880"/>
<dbReference type="STRING" id="198214.SF1264"/>
<dbReference type="PaxDb" id="198214-SF1264"/>
<dbReference type="GeneID" id="1024191"/>
<dbReference type="GeneID" id="75203373"/>
<dbReference type="KEGG" id="sfl:SF1264"/>
<dbReference type="KEGG" id="sfx:S1350"/>
<dbReference type="PATRIC" id="fig|198214.7.peg.1484"/>
<dbReference type="HOGENOM" id="CLU_016734_3_1_6"/>
<dbReference type="UniPathway" id="UPA00035">
    <property type="reaction ID" value="UER00044"/>
</dbReference>
<dbReference type="Proteomes" id="UP000001006">
    <property type="component" value="Chromosome"/>
</dbReference>
<dbReference type="Proteomes" id="UP000002673">
    <property type="component" value="Chromosome"/>
</dbReference>
<dbReference type="GO" id="GO:0005737">
    <property type="term" value="C:cytoplasm"/>
    <property type="evidence" value="ECO:0007669"/>
    <property type="project" value="TreeGrafter"/>
</dbReference>
<dbReference type="GO" id="GO:0004834">
    <property type="term" value="F:tryptophan synthase activity"/>
    <property type="evidence" value="ECO:0007669"/>
    <property type="project" value="UniProtKB-UniRule"/>
</dbReference>
<dbReference type="CDD" id="cd06446">
    <property type="entry name" value="Trp-synth_B"/>
    <property type="match status" value="1"/>
</dbReference>
<dbReference type="FunFam" id="3.40.50.1100:FF:000001">
    <property type="entry name" value="Tryptophan synthase beta chain"/>
    <property type="match status" value="1"/>
</dbReference>
<dbReference type="FunFam" id="3.40.50.1100:FF:000004">
    <property type="entry name" value="Tryptophan synthase beta chain"/>
    <property type="match status" value="1"/>
</dbReference>
<dbReference type="Gene3D" id="3.40.50.1100">
    <property type="match status" value="2"/>
</dbReference>
<dbReference type="HAMAP" id="MF_00133">
    <property type="entry name" value="Trp_synth_beta"/>
    <property type="match status" value="1"/>
</dbReference>
<dbReference type="InterPro" id="IPR006653">
    <property type="entry name" value="Trp_synth_b_CS"/>
</dbReference>
<dbReference type="InterPro" id="IPR006654">
    <property type="entry name" value="Trp_synth_beta"/>
</dbReference>
<dbReference type="InterPro" id="IPR023026">
    <property type="entry name" value="Trp_synth_beta/beta-like"/>
</dbReference>
<dbReference type="InterPro" id="IPR001926">
    <property type="entry name" value="TrpB-like_PALP"/>
</dbReference>
<dbReference type="InterPro" id="IPR036052">
    <property type="entry name" value="TrpB-like_PALP_sf"/>
</dbReference>
<dbReference type="NCBIfam" id="TIGR00263">
    <property type="entry name" value="trpB"/>
    <property type="match status" value="1"/>
</dbReference>
<dbReference type="PANTHER" id="PTHR48077:SF3">
    <property type="entry name" value="TRYPTOPHAN SYNTHASE"/>
    <property type="match status" value="1"/>
</dbReference>
<dbReference type="PANTHER" id="PTHR48077">
    <property type="entry name" value="TRYPTOPHAN SYNTHASE-RELATED"/>
    <property type="match status" value="1"/>
</dbReference>
<dbReference type="Pfam" id="PF00291">
    <property type="entry name" value="PALP"/>
    <property type="match status" value="1"/>
</dbReference>
<dbReference type="PIRSF" id="PIRSF001413">
    <property type="entry name" value="Trp_syn_beta"/>
    <property type="match status" value="1"/>
</dbReference>
<dbReference type="SUPFAM" id="SSF53686">
    <property type="entry name" value="Tryptophan synthase beta subunit-like PLP-dependent enzymes"/>
    <property type="match status" value="1"/>
</dbReference>
<dbReference type="PROSITE" id="PS00168">
    <property type="entry name" value="TRP_SYNTHASE_BETA"/>
    <property type="match status" value="1"/>
</dbReference>
<feature type="initiator methionine" description="Removed" evidence="1">
    <location>
        <position position="1"/>
    </location>
</feature>
<feature type="chain" id="PRO_0000098996" description="Tryptophan synthase beta chain">
    <location>
        <begin position="2"/>
        <end position="397"/>
    </location>
</feature>
<feature type="active site" description="Nucleophile" evidence="1">
    <location>
        <position position="62"/>
    </location>
</feature>
<feature type="active site" description="Proton donor" evidence="1">
    <location>
        <position position="86"/>
    </location>
</feature>
<feature type="modified residue" description="N6-(pyridoxal phosphate)lysine" evidence="1">
    <location>
        <position position="87"/>
    </location>
</feature>
<name>TRPB_SHIFL</name>
<gene>
    <name type="primary">trpB</name>
    <name type="ordered locus">SF1264</name>
    <name type="ordered locus">S1350</name>
</gene>
<protein>
    <recommendedName>
        <fullName>Tryptophan synthase beta chain</fullName>
        <ecNumber>4.2.1.20</ecNumber>
    </recommendedName>
</protein>